<feature type="chain" id="PRO_0000338900" description="Translation initiation factor IF-1">
    <location>
        <begin position="1"/>
        <end position="72"/>
    </location>
</feature>
<feature type="domain" description="S1-like" evidence="1">
    <location>
        <begin position="1"/>
        <end position="72"/>
    </location>
</feature>
<protein>
    <recommendedName>
        <fullName evidence="1">Translation initiation factor IF-1</fullName>
    </recommendedName>
</protein>
<dbReference type="EMBL" id="CP000661">
    <property type="protein sequence ID" value="ABP69505.1"/>
    <property type="molecule type" value="Genomic_DNA"/>
</dbReference>
<dbReference type="SMR" id="A4WQ41"/>
<dbReference type="STRING" id="349102.Rsph17025_0599"/>
<dbReference type="KEGG" id="rsq:Rsph17025_0599"/>
<dbReference type="eggNOG" id="COG0361">
    <property type="taxonomic scope" value="Bacteria"/>
</dbReference>
<dbReference type="HOGENOM" id="CLU_151267_1_0_5"/>
<dbReference type="BioCyc" id="RSPH349102:G1G8M-617-MONOMER"/>
<dbReference type="GO" id="GO:0005829">
    <property type="term" value="C:cytosol"/>
    <property type="evidence" value="ECO:0007669"/>
    <property type="project" value="TreeGrafter"/>
</dbReference>
<dbReference type="GO" id="GO:0043022">
    <property type="term" value="F:ribosome binding"/>
    <property type="evidence" value="ECO:0007669"/>
    <property type="project" value="UniProtKB-UniRule"/>
</dbReference>
<dbReference type="GO" id="GO:0019843">
    <property type="term" value="F:rRNA binding"/>
    <property type="evidence" value="ECO:0007669"/>
    <property type="project" value="UniProtKB-UniRule"/>
</dbReference>
<dbReference type="GO" id="GO:0003743">
    <property type="term" value="F:translation initiation factor activity"/>
    <property type="evidence" value="ECO:0007669"/>
    <property type="project" value="UniProtKB-UniRule"/>
</dbReference>
<dbReference type="CDD" id="cd04451">
    <property type="entry name" value="S1_IF1"/>
    <property type="match status" value="1"/>
</dbReference>
<dbReference type="FunFam" id="2.40.50.140:FF:000002">
    <property type="entry name" value="Translation initiation factor IF-1"/>
    <property type="match status" value="1"/>
</dbReference>
<dbReference type="Gene3D" id="2.40.50.140">
    <property type="entry name" value="Nucleic acid-binding proteins"/>
    <property type="match status" value="1"/>
</dbReference>
<dbReference type="HAMAP" id="MF_00075">
    <property type="entry name" value="IF_1"/>
    <property type="match status" value="1"/>
</dbReference>
<dbReference type="InterPro" id="IPR012340">
    <property type="entry name" value="NA-bd_OB-fold"/>
</dbReference>
<dbReference type="InterPro" id="IPR006196">
    <property type="entry name" value="RNA-binding_domain_S1_IF1"/>
</dbReference>
<dbReference type="InterPro" id="IPR004368">
    <property type="entry name" value="TIF_IF1"/>
</dbReference>
<dbReference type="NCBIfam" id="TIGR00008">
    <property type="entry name" value="infA"/>
    <property type="match status" value="1"/>
</dbReference>
<dbReference type="PANTHER" id="PTHR33370">
    <property type="entry name" value="TRANSLATION INITIATION FACTOR IF-1, CHLOROPLASTIC"/>
    <property type="match status" value="1"/>
</dbReference>
<dbReference type="PANTHER" id="PTHR33370:SF1">
    <property type="entry name" value="TRANSLATION INITIATION FACTOR IF-1, CHLOROPLASTIC"/>
    <property type="match status" value="1"/>
</dbReference>
<dbReference type="Pfam" id="PF01176">
    <property type="entry name" value="eIF-1a"/>
    <property type="match status" value="1"/>
</dbReference>
<dbReference type="SUPFAM" id="SSF50249">
    <property type="entry name" value="Nucleic acid-binding proteins"/>
    <property type="match status" value="1"/>
</dbReference>
<dbReference type="PROSITE" id="PS50832">
    <property type="entry name" value="S1_IF1_TYPE"/>
    <property type="match status" value="1"/>
</dbReference>
<reference key="1">
    <citation type="submission" date="2007-04" db="EMBL/GenBank/DDBJ databases">
        <title>Complete sequence of chromosome of Rhodobacter sphaeroides ATCC 17025.</title>
        <authorList>
            <consortium name="US DOE Joint Genome Institute"/>
            <person name="Copeland A."/>
            <person name="Lucas S."/>
            <person name="Lapidus A."/>
            <person name="Barry K."/>
            <person name="Detter J.C."/>
            <person name="Glavina del Rio T."/>
            <person name="Hammon N."/>
            <person name="Israni S."/>
            <person name="Dalin E."/>
            <person name="Tice H."/>
            <person name="Pitluck S."/>
            <person name="Chertkov O."/>
            <person name="Brettin T."/>
            <person name="Bruce D."/>
            <person name="Han C."/>
            <person name="Schmutz J."/>
            <person name="Larimer F."/>
            <person name="Land M."/>
            <person name="Hauser L."/>
            <person name="Kyrpides N."/>
            <person name="Kim E."/>
            <person name="Richardson P."/>
            <person name="Mackenzie C."/>
            <person name="Choudhary M."/>
            <person name="Donohue T.J."/>
            <person name="Kaplan S."/>
        </authorList>
    </citation>
    <scope>NUCLEOTIDE SEQUENCE [LARGE SCALE GENOMIC DNA]</scope>
    <source>
        <strain>ATCC 17025 / ATH 2.4.3</strain>
    </source>
</reference>
<accession>A4WQ41</accession>
<sequence length="72" mass="8250">MAKEDTLEFPGVVKELLPNATFRVELDNGHELIAVMAGKMRKNRIRVLAGDKVQVEMTPYDLSKGRINYRFK</sequence>
<comment type="function">
    <text evidence="1">One of the essential components for the initiation of protein synthesis. Stabilizes the binding of IF-2 and IF-3 on the 30S subunit to which N-formylmethionyl-tRNA(fMet) subsequently binds. Helps modulate mRNA selection, yielding the 30S pre-initiation complex (PIC). Upon addition of the 50S ribosomal subunit IF-1, IF-2 and IF-3 are released leaving the mature 70S translation initiation complex.</text>
</comment>
<comment type="subunit">
    <text evidence="1">Component of the 30S ribosomal translation pre-initiation complex which assembles on the 30S ribosome in the order IF-2 and IF-3, IF-1 and N-formylmethionyl-tRNA(fMet); mRNA recruitment can occur at any time during PIC assembly.</text>
</comment>
<comment type="subcellular location">
    <subcellularLocation>
        <location evidence="1">Cytoplasm</location>
    </subcellularLocation>
</comment>
<comment type="similarity">
    <text evidence="1">Belongs to the IF-1 family.</text>
</comment>
<keyword id="KW-0963">Cytoplasm</keyword>
<keyword id="KW-0396">Initiation factor</keyword>
<keyword id="KW-0648">Protein biosynthesis</keyword>
<keyword id="KW-0694">RNA-binding</keyword>
<keyword id="KW-0699">rRNA-binding</keyword>
<name>IF1_CERS5</name>
<evidence type="ECO:0000255" key="1">
    <source>
        <dbReference type="HAMAP-Rule" id="MF_00075"/>
    </source>
</evidence>
<proteinExistence type="inferred from homology"/>
<organism>
    <name type="scientific">Cereibacter sphaeroides (strain ATCC 17025 / ATH 2.4.3)</name>
    <name type="common">Rhodobacter sphaeroides</name>
    <dbReference type="NCBI Taxonomy" id="349102"/>
    <lineage>
        <taxon>Bacteria</taxon>
        <taxon>Pseudomonadati</taxon>
        <taxon>Pseudomonadota</taxon>
        <taxon>Alphaproteobacteria</taxon>
        <taxon>Rhodobacterales</taxon>
        <taxon>Paracoccaceae</taxon>
        <taxon>Cereibacter</taxon>
    </lineage>
</organism>
<gene>
    <name evidence="1" type="primary">infA</name>
    <name type="ordered locus">Rsph17025_0599</name>
</gene>